<feature type="chain" id="PRO_0000275829" description="Taurine import ATP-binding protein TauB">
    <location>
        <begin position="1"/>
        <end position="255"/>
    </location>
</feature>
<feature type="domain" description="ABC transporter" evidence="1">
    <location>
        <begin position="2"/>
        <end position="229"/>
    </location>
</feature>
<feature type="binding site" evidence="1">
    <location>
        <begin position="34"/>
        <end position="41"/>
    </location>
    <ligand>
        <name>ATP</name>
        <dbReference type="ChEBI" id="CHEBI:30616"/>
    </ligand>
</feature>
<sequence length="255" mass="28179">MLQISHLYADYGGKPALEDINLTLESGELLVVLGPSGCGKTTLLNLIAGFVPYQHGSIQLAGKGIQGPGAERGVVFQNEGLLPWRNVQDNVAFGLQLAGVEKMQRLEIAHQMVKKVGLEGAEKRYIWQLSGGQRQRVGIARALAANPQLLLLDEPFGALDAFTRDQMQTLLLKLWQETGKQVLLITHDIEEAVFMATELVLLSPGPGRVLERLPLNFARRFVAGESSRSIKSDPQFIAMREYVLSRVFEQREAFS</sequence>
<keyword id="KW-0067">ATP-binding</keyword>
<keyword id="KW-0997">Cell inner membrane</keyword>
<keyword id="KW-1003">Cell membrane</keyword>
<keyword id="KW-0472">Membrane</keyword>
<keyword id="KW-0547">Nucleotide-binding</keyword>
<keyword id="KW-1278">Translocase</keyword>
<keyword id="KW-0813">Transport</keyword>
<dbReference type="EC" id="7.6.2.7" evidence="1"/>
<dbReference type="EMBL" id="CP000243">
    <property type="protein sequence ID" value="ABE05886.1"/>
    <property type="molecule type" value="Genomic_DNA"/>
</dbReference>
<dbReference type="RefSeq" id="WP_000939359.1">
    <property type="nucleotide sequence ID" value="NZ_CP064825.1"/>
</dbReference>
<dbReference type="SMR" id="Q1RFH8"/>
<dbReference type="KEGG" id="eci:UTI89_C0385"/>
<dbReference type="HOGENOM" id="CLU_000604_1_22_6"/>
<dbReference type="Proteomes" id="UP000001952">
    <property type="component" value="Chromosome"/>
</dbReference>
<dbReference type="GO" id="GO:0005886">
    <property type="term" value="C:plasma membrane"/>
    <property type="evidence" value="ECO:0007669"/>
    <property type="project" value="UniProtKB-SubCell"/>
</dbReference>
<dbReference type="GO" id="GO:0015411">
    <property type="term" value="F:ABC-type taurine transporter transporter activity"/>
    <property type="evidence" value="ECO:0007669"/>
    <property type="project" value="UniProtKB-EC"/>
</dbReference>
<dbReference type="GO" id="GO:0005524">
    <property type="term" value="F:ATP binding"/>
    <property type="evidence" value="ECO:0007669"/>
    <property type="project" value="UniProtKB-KW"/>
</dbReference>
<dbReference type="GO" id="GO:0016887">
    <property type="term" value="F:ATP hydrolysis activity"/>
    <property type="evidence" value="ECO:0007669"/>
    <property type="project" value="InterPro"/>
</dbReference>
<dbReference type="CDD" id="cd03293">
    <property type="entry name" value="ABC_NrtD_SsuB_transporters"/>
    <property type="match status" value="1"/>
</dbReference>
<dbReference type="FunFam" id="3.40.50.300:FF:000653">
    <property type="entry name" value="Aliphatic sulfonates import ATP-binding protein SsuB"/>
    <property type="match status" value="1"/>
</dbReference>
<dbReference type="Gene3D" id="3.40.50.300">
    <property type="entry name" value="P-loop containing nucleotide triphosphate hydrolases"/>
    <property type="match status" value="1"/>
</dbReference>
<dbReference type="InterPro" id="IPR003593">
    <property type="entry name" value="AAA+_ATPase"/>
</dbReference>
<dbReference type="InterPro" id="IPR003439">
    <property type="entry name" value="ABC_transporter-like_ATP-bd"/>
</dbReference>
<dbReference type="InterPro" id="IPR017871">
    <property type="entry name" value="ABC_transporter-like_CS"/>
</dbReference>
<dbReference type="InterPro" id="IPR050166">
    <property type="entry name" value="ABC_transporter_ATP-bind"/>
</dbReference>
<dbReference type="InterPro" id="IPR027417">
    <property type="entry name" value="P-loop_NTPase"/>
</dbReference>
<dbReference type="NCBIfam" id="NF008421">
    <property type="entry name" value="PRK11248.1"/>
    <property type="match status" value="1"/>
</dbReference>
<dbReference type="PANTHER" id="PTHR42788:SF18">
    <property type="entry name" value="TAURINE IMPORT ATP-BINDING PROTEIN TAUB"/>
    <property type="match status" value="1"/>
</dbReference>
<dbReference type="PANTHER" id="PTHR42788">
    <property type="entry name" value="TAURINE IMPORT ATP-BINDING PROTEIN-RELATED"/>
    <property type="match status" value="1"/>
</dbReference>
<dbReference type="Pfam" id="PF00005">
    <property type="entry name" value="ABC_tran"/>
    <property type="match status" value="1"/>
</dbReference>
<dbReference type="SMART" id="SM00382">
    <property type="entry name" value="AAA"/>
    <property type="match status" value="1"/>
</dbReference>
<dbReference type="SUPFAM" id="SSF52540">
    <property type="entry name" value="P-loop containing nucleoside triphosphate hydrolases"/>
    <property type="match status" value="1"/>
</dbReference>
<dbReference type="PROSITE" id="PS00211">
    <property type="entry name" value="ABC_TRANSPORTER_1"/>
    <property type="match status" value="1"/>
</dbReference>
<dbReference type="PROSITE" id="PS50893">
    <property type="entry name" value="ABC_TRANSPORTER_2"/>
    <property type="match status" value="1"/>
</dbReference>
<dbReference type="PROSITE" id="PS51250">
    <property type="entry name" value="TAUB"/>
    <property type="match status" value="1"/>
</dbReference>
<proteinExistence type="inferred from homology"/>
<gene>
    <name evidence="1" type="primary">tauB</name>
    <name type="ordered locus">UTI89_C0385</name>
</gene>
<reference key="1">
    <citation type="journal article" date="2006" name="Proc. Natl. Acad. Sci. U.S.A.">
        <title>Identification of genes subject to positive selection in uropathogenic strains of Escherichia coli: a comparative genomics approach.</title>
        <authorList>
            <person name="Chen S.L."/>
            <person name="Hung C.-S."/>
            <person name="Xu J."/>
            <person name="Reigstad C.S."/>
            <person name="Magrini V."/>
            <person name="Sabo A."/>
            <person name="Blasiar D."/>
            <person name="Bieri T."/>
            <person name="Meyer R.R."/>
            <person name="Ozersky P."/>
            <person name="Armstrong J.R."/>
            <person name="Fulton R.S."/>
            <person name="Latreille J.P."/>
            <person name="Spieth J."/>
            <person name="Hooton T.M."/>
            <person name="Mardis E.R."/>
            <person name="Hultgren S.J."/>
            <person name="Gordon J.I."/>
        </authorList>
    </citation>
    <scope>NUCLEOTIDE SEQUENCE [LARGE SCALE GENOMIC DNA]</scope>
    <source>
        <strain>UTI89 / UPEC</strain>
    </source>
</reference>
<name>TAUB_ECOUT</name>
<accession>Q1RFH8</accession>
<evidence type="ECO:0000255" key="1">
    <source>
        <dbReference type="HAMAP-Rule" id="MF_01714"/>
    </source>
</evidence>
<organism>
    <name type="scientific">Escherichia coli (strain UTI89 / UPEC)</name>
    <dbReference type="NCBI Taxonomy" id="364106"/>
    <lineage>
        <taxon>Bacteria</taxon>
        <taxon>Pseudomonadati</taxon>
        <taxon>Pseudomonadota</taxon>
        <taxon>Gammaproteobacteria</taxon>
        <taxon>Enterobacterales</taxon>
        <taxon>Enterobacteriaceae</taxon>
        <taxon>Escherichia</taxon>
    </lineage>
</organism>
<comment type="function">
    <text evidence="1">Part of the ABC transporter complex TauABC involved in taurine import. Responsible for energy coupling to the transport system.</text>
</comment>
<comment type="catalytic activity">
    <reaction evidence="1">
        <text>taurine(out) + ATP + H2O = taurine(in) + ADP + phosphate + H(+)</text>
        <dbReference type="Rhea" id="RHEA:14613"/>
        <dbReference type="ChEBI" id="CHEBI:15377"/>
        <dbReference type="ChEBI" id="CHEBI:15378"/>
        <dbReference type="ChEBI" id="CHEBI:30616"/>
        <dbReference type="ChEBI" id="CHEBI:43474"/>
        <dbReference type="ChEBI" id="CHEBI:456216"/>
        <dbReference type="ChEBI" id="CHEBI:507393"/>
        <dbReference type="EC" id="7.6.2.7"/>
    </reaction>
</comment>
<comment type="subunit">
    <text evidence="1">The complex is composed of two ATP-binding proteins (TauB), two transmembrane proteins (TauC) and a solute-binding protein (TauA).</text>
</comment>
<comment type="subcellular location">
    <subcellularLocation>
        <location evidence="1">Cell inner membrane</location>
        <topology evidence="1">Peripheral membrane protein</topology>
    </subcellularLocation>
</comment>
<comment type="similarity">
    <text evidence="1">Belongs to the ABC transporter superfamily. Taurine importer (TC 3.A.1.17.1) family.</text>
</comment>
<protein>
    <recommendedName>
        <fullName evidence="1">Taurine import ATP-binding protein TauB</fullName>
        <ecNumber evidence="1">7.6.2.7</ecNumber>
    </recommendedName>
</protein>